<keyword id="KW-0227">DNA damage</keyword>
<keyword id="KW-0233">DNA recombination</keyword>
<keyword id="KW-0234">DNA repair</keyword>
<keyword id="KW-0238">DNA-binding</keyword>
<keyword id="KW-1185">Reference proteome</keyword>
<sequence>MRAIWTGSIAFGLVNVPVKVYSATADHDIRFHQVHAKDNGRIRYKRVCEACGEVVDYRDLARAYESGDGQMVAITDDDIASLPEERSREIEVLEFVPAADVDPMMFDRSYFLEPDSKSSKSYVLLAKTLAETDRMAIVHFTLRNKTRLAALRVKDFGKREVMMVHTLLWPDEIRDPDFPVLDQKVEIKPAELKMAGQVVDSMADDFNPDRYHDTYQEQLQELIDTKLEGGQAFTAEDQPRLLDEPEDVSDLLAKLEASVKARSKANSNVPTPP</sequence>
<proteinExistence type="evidence at protein level"/>
<feature type="chain" id="PRO_0000425945" description="Non-homologous end joining protein Ku">
    <location>
        <begin position="1"/>
        <end position="273"/>
    </location>
</feature>
<feature type="domain" description="Ku" evidence="1">
    <location>
        <begin position="10"/>
        <end position="193"/>
    </location>
</feature>
<feature type="region of interest" description="Sufficient for interaction with LigD">
    <location>
        <begin position="111"/>
        <end position="273"/>
    </location>
</feature>
<name>KU_MYCTU</name>
<gene>
    <name type="primary">mku</name>
    <name type="ordered locus">Rv0937c</name>
</gene>
<comment type="function">
    <text evidence="2 3 4 5">With LigD forms a non-homologous end joining (NHEJ) repair enzyme. Binds linear dsDNA with 5'- and 3'-overhangs but not closed circular dsDNA nor ssDNA. One dimer binds for every 30 bp. Recruits and stimulates the ligase activity of LigD but not of T4 ligase or a human ligase complex (LIG4/XRCC4). Attenuates the 3'- to 5'-exonuclease activity of LigD. Stimulates the template-directed addition of dNTPs by LigD on 5'-overhangs and nuclease activity on 3'-overhangs.</text>
</comment>
<comment type="subunit">
    <text evidence="1 2 4 5 6 7">Homodimer (Probable). Interacts with LigD in the absence of DSBs, and with the isolated Pol domain of LigD in the presence of DNA. Interacts with Sir2, possibly in a trimeric complex with LigD.</text>
</comment>
<comment type="similarity">
    <text evidence="1">Belongs to the prokaryotic Ku family.</text>
</comment>
<organism>
    <name type="scientific">Mycobacterium tuberculosis (strain ATCC 25618 / H37Rv)</name>
    <dbReference type="NCBI Taxonomy" id="83332"/>
    <lineage>
        <taxon>Bacteria</taxon>
        <taxon>Bacillati</taxon>
        <taxon>Actinomycetota</taxon>
        <taxon>Actinomycetes</taxon>
        <taxon>Mycobacteriales</taxon>
        <taxon>Mycobacteriaceae</taxon>
        <taxon>Mycobacterium</taxon>
        <taxon>Mycobacterium tuberculosis complex</taxon>
    </lineage>
</organism>
<reference key="1">
    <citation type="journal article" date="1998" name="Nature">
        <title>Deciphering the biology of Mycobacterium tuberculosis from the complete genome sequence.</title>
        <authorList>
            <person name="Cole S.T."/>
            <person name="Brosch R."/>
            <person name="Parkhill J."/>
            <person name="Garnier T."/>
            <person name="Churcher C.M."/>
            <person name="Harris D.E."/>
            <person name="Gordon S.V."/>
            <person name="Eiglmeier K."/>
            <person name="Gas S."/>
            <person name="Barry C.E. III"/>
            <person name="Tekaia F."/>
            <person name="Badcock K."/>
            <person name="Basham D."/>
            <person name="Brown D."/>
            <person name="Chillingworth T."/>
            <person name="Connor R."/>
            <person name="Davies R.M."/>
            <person name="Devlin K."/>
            <person name="Feltwell T."/>
            <person name="Gentles S."/>
            <person name="Hamlin N."/>
            <person name="Holroyd S."/>
            <person name="Hornsby T."/>
            <person name="Jagels K."/>
            <person name="Krogh A."/>
            <person name="McLean J."/>
            <person name="Moule S."/>
            <person name="Murphy L.D."/>
            <person name="Oliver S."/>
            <person name="Osborne J."/>
            <person name="Quail M.A."/>
            <person name="Rajandream M.A."/>
            <person name="Rogers J."/>
            <person name="Rutter S."/>
            <person name="Seeger K."/>
            <person name="Skelton S."/>
            <person name="Squares S."/>
            <person name="Squares R."/>
            <person name="Sulston J.E."/>
            <person name="Taylor K."/>
            <person name="Whitehead S."/>
            <person name="Barrell B.G."/>
        </authorList>
    </citation>
    <scope>NUCLEOTIDE SEQUENCE [LARGE SCALE GENOMIC DNA]</scope>
    <source>
        <strain>ATCC 25618 / H37Rv</strain>
    </source>
</reference>
<reference key="2">
    <citation type="journal article" date="2002" name="Science">
        <title>Identification of a DNA nonhomologous end-joining complex in bacteria.</title>
        <authorList>
            <person name="Weller G.R."/>
            <person name="Kysela B."/>
            <person name="Roy R."/>
            <person name="Tonkin L.M."/>
            <person name="Scanlan E."/>
            <person name="Della M."/>
            <person name="Devine S.K."/>
            <person name="Day J.P."/>
            <person name="Wilkinson A."/>
            <person name="d'Adda di Fagagna F."/>
            <person name="Devine K.M."/>
            <person name="Bowater R.P."/>
            <person name="Jeggo P.A."/>
            <person name="Jackson S.P."/>
            <person name="Doherty A.J."/>
        </authorList>
    </citation>
    <scope>FUNCTION</scope>
    <scope>INTERACTION WITH LIGD</scope>
    <scope>SUBUNIT</scope>
    <scope>DNA-BINDING</scope>
    <source>
        <strain>ATCC 25618 / H37Rv</strain>
    </source>
</reference>
<reference key="3">
    <citation type="journal article" date="2004" name="Science">
        <title>Mycobacterial Ku and ligase proteins constitute a two-component NHEJ repair machine.</title>
        <authorList>
            <person name="Della M."/>
            <person name="Palmbos P.L."/>
            <person name="Tseng H.M."/>
            <person name="Tonkin L.M."/>
            <person name="Daley J.M."/>
            <person name="Topper L.M."/>
            <person name="Pitcher R.S."/>
            <person name="Tomkinson A.E."/>
            <person name="Wilson T.E."/>
            <person name="Doherty A.J."/>
        </authorList>
    </citation>
    <scope>FUNCTION</scope>
    <source>
        <strain>ATCC 25618 / H37Rv</strain>
    </source>
</reference>
<reference key="4">
    <citation type="journal article" date="2005" name="Nat. Struct. Mol. Biol.">
        <title>Mechanism of nonhomologous end-joining in mycobacteria: a low-fidelity repair system driven by Ku, ligase D and ligase C.</title>
        <authorList>
            <person name="Gong C."/>
            <person name="Bongiorno P."/>
            <person name="Martins A."/>
            <person name="Stephanou N.C."/>
            <person name="Zhu H."/>
            <person name="Shuman S."/>
            <person name="Glickman M.S."/>
        </authorList>
    </citation>
    <scope>FUNCTION</scope>
    <scope>INTERACTION WITH LIGD</scope>
    <scope>DOMAIN</scope>
</reference>
<reference key="5">
    <citation type="journal article" date="2005" name="J. Mol. Biol.">
        <title>Domain structure of a NHEJ DNA repair ligase from Mycobacterium tuberculosis.</title>
        <authorList>
            <person name="Pitcher R.S."/>
            <person name="Tonkin L.M."/>
            <person name="Green A.J."/>
            <person name="Doherty A.J."/>
        </authorList>
    </citation>
    <scope>FUNCTION</scope>
    <scope>INTERACTION WITH LIGD</scope>
    <source>
        <strain>ATCC 25618 / H37Rv</strain>
    </source>
</reference>
<reference key="6">
    <citation type="journal article" date="2011" name="Mol. Cell. Proteomics">
        <title>Proteogenomic analysis of Mycobacterium tuberculosis by high resolution mass spectrometry.</title>
        <authorList>
            <person name="Kelkar D.S."/>
            <person name="Kumar D."/>
            <person name="Kumar P."/>
            <person name="Balakrishnan L."/>
            <person name="Muthusamy B."/>
            <person name="Yadav A.K."/>
            <person name="Shrivastava P."/>
            <person name="Marimuthu A."/>
            <person name="Anand S."/>
            <person name="Sundaram H."/>
            <person name="Kingsbury R."/>
            <person name="Harsha H.C."/>
            <person name="Nair B."/>
            <person name="Prasad T.S."/>
            <person name="Chauhan D.S."/>
            <person name="Katoch K."/>
            <person name="Katoch V.M."/>
            <person name="Kumar P."/>
            <person name="Chaerkady R."/>
            <person name="Ramachandran S."/>
            <person name="Dash D."/>
            <person name="Pandey A."/>
        </authorList>
    </citation>
    <scope>IDENTIFICATION BY MASS SPECTROMETRY [LARGE SCALE ANALYSIS]</scope>
    <source>
        <strain>ATCC 25618 / H37Rv</strain>
    </source>
</reference>
<reference key="7">
    <citation type="journal article" date="2011" name="PLoS ONE">
        <title>A Sir2-like protein participates in mycobacterial NHEJ.</title>
        <authorList>
            <person name="Li Z."/>
            <person name="Wen J."/>
            <person name="Lin Y."/>
            <person name="Wang S."/>
            <person name="Xue P."/>
            <person name="Zhang Z."/>
            <person name="Zhou Y."/>
            <person name="Wang X."/>
            <person name="Sui L."/>
            <person name="Bi L.J."/>
            <person name="Zhang X.E."/>
        </authorList>
    </citation>
    <scope>INTERACTION WITH SIR2</scope>
    <scope>SUBUNIT</scope>
</reference>
<dbReference type="EMBL" id="AL123456">
    <property type="protein sequence ID" value="CCP43685.1"/>
    <property type="molecule type" value="Genomic_DNA"/>
</dbReference>
<dbReference type="PIR" id="A70585">
    <property type="entry name" value="A70585"/>
</dbReference>
<dbReference type="RefSeq" id="NP_215452.1">
    <property type="nucleotide sequence ID" value="NC_000962.3"/>
</dbReference>
<dbReference type="RefSeq" id="WP_003404795.1">
    <property type="nucleotide sequence ID" value="NZ_NVQJ01000001.1"/>
</dbReference>
<dbReference type="SMR" id="P9WKD9"/>
<dbReference type="FunCoup" id="P9WKD9">
    <property type="interactions" value="1"/>
</dbReference>
<dbReference type="STRING" id="83332.Rv0937c"/>
<dbReference type="PaxDb" id="83332-Rv0937c"/>
<dbReference type="DNASU" id="885050"/>
<dbReference type="GeneID" id="885050"/>
<dbReference type="KEGG" id="mtu:Rv0937c"/>
<dbReference type="KEGG" id="mtv:RVBD_0937c"/>
<dbReference type="TubercuList" id="Rv0937c"/>
<dbReference type="eggNOG" id="COG1273">
    <property type="taxonomic scope" value="Bacteria"/>
</dbReference>
<dbReference type="InParanoid" id="P9WKD9"/>
<dbReference type="OrthoDB" id="9795084at2"/>
<dbReference type="PhylomeDB" id="P9WKD9"/>
<dbReference type="Proteomes" id="UP000001584">
    <property type="component" value="Chromosome"/>
</dbReference>
<dbReference type="GO" id="GO:0033202">
    <property type="term" value="C:DNA helicase complex"/>
    <property type="evidence" value="ECO:0000314"/>
    <property type="project" value="MTBBASE"/>
</dbReference>
<dbReference type="GO" id="GO:0003690">
    <property type="term" value="F:double-stranded DNA binding"/>
    <property type="evidence" value="ECO:0000314"/>
    <property type="project" value="UniProtKB"/>
</dbReference>
<dbReference type="GO" id="GO:0042803">
    <property type="term" value="F:protein homodimerization activity"/>
    <property type="evidence" value="ECO:0000353"/>
    <property type="project" value="MTBBASE"/>
</dbReference>
<dbReference type="GO" id="GO:0006310">
    <property type="term" value="P:DNA recombination"/>
    <property type="evidence" value="ECO:0007669"/>
    <property type="project" value="UniProtKB-KW"/>
</dbReference>
<dbReference type="GO" id="GO:0006303">
    <property type="term" value="P:double-strand break repair via nonhomologous end joining"/>
    <property type="evidence" value="ECO:0000314"/>
    <property type="project" value="UniProtKB"/>
</dbReference>
<dbReference type="GO" id="GO:0051351">
    <property type="term" value="P:positive regulation of ligase activity"/>
    <property type="evidence" value="ECO:0000314"/>
    <property type="project" value="UniProtKB"/>
</dbReference>
<dbReference type="CDD" id="cd00789">
    <property type="entry name" value="KU_like"/>
    <property type="match status" value="1"/>
</dbReference>
<dbReference type="FunFam" id="2.40.290.10:FF:000004">
    <property type="entry name" value="Non-homologous end joining protein Ku"/>
    <property type="match status" value="1"/>
</dbReference>
<dbReference type="Gene3D" id="2.40.290.10">
    <property type="match status" value="1"/>
</dbReference>
<dbReference type="HAMAP" id="MF_01875">
    <property type="entry name" value="Prokaryotic_Ku"/>
    <property type="match status" value="1"/>
</dbReference>
<dbReference type="InterPro" id="IPR006164">
    <property type="entry name" value="Ku70/Ku80_beta-barrel_dom"/>
</dbReference>
<dbReference type="InterPro" id="IPR009187">
    <property type="entry name" value="Prok_Ku"/>
</dbReference>
<dbReference type="InterPro" id="IPR016194">
    <property type="entry name" value="SPOC-like_C_dom_sf"/>
</dbReference>
<dbReference type="NCBIfam" id="TIGR02772">
    <property type="entry name" value="Ku_bact"/>
    <property type="match status" value="1"/>
</dbReference>
<dbReference type="PANTHER" id="PTHR41251">
    <property type="entry name" value="NON-HOMOLOGOUS END JOINING PROTEIN KU"/>
    <property type="match status" value="1"/>
</dbReference>
<dbReference type="PANTHER" id="PTHR41251:SF1">
    <property type="entry name" value="NON-HOMOLOGOUS END JOINING PROTEIN KU"/>
    <property type="match status" value="1"/>
</dbReference>
<dbReference type="Pfam" id="PF02735">
    <property type="entry name" value="Ku"/>
    <property type="match status" value="1"/>
</dbReference>
<dbReference type="PIRSF" id="PIRSF006493">
    <property type="entry name" value="Prok_Ku"/>
    <property type="match status" value="1"/>
</dbReference>
<dbReference type="SMART" id="SM00559">
    <property type="entry name" value="Ku78"/>
    <property type="match status" value="1"/>
</dbReference>
<dbReference type="SUPFAM" id="SSF100939">
    <property type="entry name" value="SPOC domain-like"/>
    <property type="match status" value="1"/>
</dbReference>
<protein>
    <recommendedName>
        <fullName evidence="1">Non-homologous end joining protein Ku</fullName>
    </recommendedName>
    <alternativeName>
        <fullName>Mt-Ku</fullName>
    </alternativeName>
</protein>
<accession>P9WKD9</accession>
<accession>L7N5V9</accession>
<evidence type="ECO:0000255" key="1">
    <source>
        <dbReference type="HAMAP-Rule" id="MF_01875"/>
    </source>
</evidence>
<evidence type="ECO:0000269" key="2">
    <source>
    </source>
</evidence>
<evidence type="ECO:0000269" key="3">
    <source>
    </source>
</evidence>
<evidence type="ECO:0000269" key="4">
    <source>
    </source>
</evidence>
<evidence type="ECO:0000269" key="5">
    <source>
    </source>
</evidence>
<evidence type="ECO:0000269" key="6">
    <source>
    </source>
</evidence>
<evidence type="ECO:0000305" key="7"/>